<gene>
    <name type="primary">MUB2</name>
    <name type="ordered locus">Os06g0224100</name>
    <name type="ordered locus">LOC_Os06g12020</name>
    <name type="ORF">P0638H11.28</name>
</gene>
<comment type="function">
    <text evidence="1">May serve as docking site to facilitate the association of other proteins to the plasma membrane.</text>
</comment>
<comment type="subcellular location">
    <subcellularLocation>
        <location evidence="1">Cell membrane</location>
        <topology evidence="1">Lipid-anchor</topology>
    </subcellularLocation>
</comment>
<sequence length="126" mass="13554">MASGGGGGGGMEAVEVRFRLDDGSDIGPSMHDQATTVTALKEFVLARWPQGKEIAPRTVNDVTIINAGQVLENNRTLAESRNLAAESPEGPITMHVVVRRSRPERRVKQPPKARPPERIGCGCTIL</sequence>
<organism>
    <name type="scientific">Oryza sativa subsp. japonica</name>
    <name type="common">Rice</name>
    <dbReference type="NCBI Taxonomy" id="39947"/>
    <lineage>
        <taxon>Eukaryota</taxon>
        <taxon>Viridiplantae</taxon>
        <taxon>Streptophyta</taxon>
        <taxon>Embryophyta</taxon>
        <taxon>Tracheophyta</taxon>
        <taxon>Spermatophyta</taxon>
        <taxon>Magnoliopsida</taxon>
        <taxon>Liliopsida</taxon>
        <taxon>Poales</taxon>
        <taxon>Poaceae</taxon>
        <taxon>BOP clade</taxon>
        <taxon>Oryzoideae</taxon>
        <taxon>Oryzeae</taxon>
        <taxon>Oryzinae</taxon>
        <taxon>Oryza</taxon>
        <taxon>Oryza sativa</taxon>
    </lineage>
</organism>
<protein>
    <recommendedName>
        <fullName>Membrane-anchored ubiquitin-fold protein 2</fullName>
        <shortName>Membrane-anchored ub-fold protein 2</shortName>
    </recommendedName>
    <alternativeName>
        <fullName>OsMUB2</fullName>
    </alternativeName>
</protein>
<accession>Q67UI2</accession>
<accession>Q0DDH3</accession>
<keyword id="KW-1003">Cell membrane</keyword>
<keyword id="KW-0449">Lipoprotein</keyword>
<keyword id="KW-0472">Membrane</keyword>
<keyword id="KW-0488">Methylation</keyword>
<keyword id="KW-0636">Prenylation</keyword>
<keyword id="KW-1185">Reference proteome</keyword>
<dbReference type="EMBL" id="AP005545">
    <property type="protein sequence ID" value="BAD38187.1"/>
    <property type="molecule type" value="Genomic_DNA"/>
</dbReference>
<dbReference type="EMBL" id="AP008212">
    <property type="protein sequence ID" value="BAF19100.1"/>
    <property type="molecule type" value="Genomic_DNA"/>
</dbReference>
<dbReference type="EMBL" id="AP014962">
    <property type="protein sequence ID" value="BAS96851.1"/>
    <property type="molecule type" value="Genomic_DNA"/>
</dbReference>
<dbReference type="EMBL" id="AK061083">
    <property type="protein sequence ID" value="BAG87718.1"/>
    <property type="molecule type" value="mRNA"/>
</dbReference>
<dbReference type="RefSeq" id="XP_015641698.1">
    <property type="nucleotide sequence ID" value="XM_015786212.1"/>
</dbReference>
<dbReference type="SMR" id="Q67UI2"/>
<dbReference type="FunCoup" id="Q67UI2">
    <property type="interactions" value="203"/>
</dbReference>
<dbReference type="PaxDb" id="39947-Q67UI2"/>
<dbReference type="EnsemblPlants" id="Os06t0224100-01">
    <property type="protein sequence ID" value="Os06t0224100-01"/>
    <property type="gene ID" value="Os06g0224100"/>
</dbReference>
<dbReference type="Gramene" id="Os06t0224100-01">
    <property type="protein sequence ID" value="Os06t0224100-01"/>
    <property type="gene ID" value="Os06g0224100"/>
</dbReference>
<dbReference type="KEGG" id="dosa:Os06g0224100"/>
<dbReference type="HOGENOM" id="CLU_136465_1_0_1"/>
<dbReference type="InParanoid" id="Q67UI2"/>
<dbReference type="OMA" id="DNFTHES"/>
<dbReference type="OrthoDB" id="1043111at2759"/>
<dbReference type="Proteomes" id="UP000000763">
    <property type="component" value="Chromosome 6"/>
</dbReference>
<dbReference type="Proteomes" id="UP000059680">
    <property type="component" value="Chromosome 6"/>
</dbReference>
<dbReference type="GO" id="GO:0005886">
    <property type="term" value="C:plasma membrane"/>
    <property type="evidence" value="ECO:0007669"/>
    <property type="project" value="UniProtKB-SubCell"/>
</dbReference>
<dbReference type="CDD" id="cd01814">
    <property type="entry name" value="Ubl_MUBs_plant"/>
    <property type="match status" value="1"/>
</dbReference>
<dbReference type="Gene3D" id="3.10.20.90">
    <property type="entry name" value="Phosphatidylinositol 3-kinase Catalytic Subunit, Chain A, domain 1"/>
    <property type="match status" value="1"/>
</dbReference>
<dbReference type="InterPro" id="IPR017000">
    <property type="entry name" value="MUB"/>
</dbReference>
<dbReference type="InterPro" id="IPR029071">
    <property type="entry name" value="Ubiquitin-like_domsf"/>
</dbReference>
<dbReference type="InterPro" id="IPR040015">
    <property type="entry name" value="UBL3-like"/>
</dbReference>
<dbReference type="InterPro" id="IPR039540">
    <property type="entry name" value="UBL3-like_ubiquitin_dom"/>
</dbReference>
<dbReference type="PANTHER" id="PTHR13169:SF9">
    <property type="entry name" value="MEMBRANE-ANCHORED UBIQUITIN-FOLD PROTEIN 2"/>
    <property type="match status" value="1"/>
</dbReference>
<dbReference type="PANTHER" id="PTHR13169">
    <property type="entry name" value="UBIQUITIN-LIKE PROTEIN 3 HCG-1 PROTEIN"/>
    <property type="match status" value="1"/>
</dbReference>
<dbReference type="Pfam" id="PF13881">
    <property type="entry name" value="Rad60-SLD_2"/>
    <property type="match status" value="1"/>
</dbReference>
<dbReference type="PIRSF" id="PIRSF032572">
    <property type="entry name" value="MUB"/>
    <property type="match status" value="1"/>
</dbReference>
<dbReference type="SUPFAM" id="SSF54236">
    <property type="entry name" value="Ubiquitin-like"/>
    <property type="match status" value="1"/>
</dbReference>
<name>MUB2_ORYSJ</name>
<feature type="chain" id="PRO_0000248175" description="Membrane-anchored ubiquitin-fold protein 2">
    <location>
        <begin position="1"/>
        <end position="123"/>
    </location>
</feature>
<feature type="propeptide" id="PRO_0000248176" description="Removed in mature form" evidence="1">
    <location>
        <begin position="124"/>
        <end position="126"/>
    </location>
</feature>
<feature type="domain" description="Ubiquitin-like">
    <location>
        <begin position="14"/>
        <end position="79"/>
    </location>
</feature>
<feature type="modified residue" description="Cysteine methyl ester" evidence="2">
    <location>
        <position position="123"/>
    </location>
</feature>
<feature type="lipid moiety-binding region" description="S-geranylgeranyl cysteine" evidence="1">
    <location>
        <position position="123"/>
    </location>
</feature>
<reference key="1">
    <citation type="journal article" date="2005" name="Nature">
        <title>The map-based sequence of the rice genome.</title>
        <authorList>
            <consortium name="International rice genome sequencing project (IRGSP)"/>
        </authorList>
    </citation>
    <scope>NUCLEOTIDE SEQUENCE [LARGE SCALE GENOMIC DNA]</scope>
    <source>
        <strain>cv. Nipponbare</strain>
    </source>
</reference>
<reference key="2">
    <citation type="journal article" date="2008" name="Nucleic Acids Res.">
        <title>The rice annotation project database (RAP-DB): 2008 update.</title>
        <authorList>
            <consortium name="The rice annotation project (RAP)"/>
        </authorList>
    </citation>
    <scope>GENOME REANNOTATION</scope>
    <source>
        <strain>cv. Nipponbare</strain>
    </source>
</reference>
<reference key="3">
    <citation type="journal article" date="2013" name="Rice">
        <title>Improvement of the Oryza sativa Nipponbare reference genome using next generation sequence and optical map data.</title>
        <authorList>
            <person name="Kawahara Y."/>
            <person name="de la Bastide M."/>
            <person name="Hamilton J.P."/>
            <person name="Kanamori H."/>
            <person name="McCombie W.R."/>
            <person name="Ouyang S."/>
            <person name="Schwartz D.C."/>
            <person name="Tanaka T."/>
            <person name="Wu J."/>
            <person name="Zhou S."/>
            <person name="Childs K.L."/>
            <person name="Davidson R.M."/>
            <person name="Lin H."/>
            <person name="Quesada-Ocampo L."/>
            <person name="Vaillancourt B."/>
            <person name="Sakai H."/>
            <person name="Lee S.S."/>
            <person name="Kim J."/>
            <person name="Numa H."/>
            <person name="Itoh T."/>
            <person name="Buell C.R."/>
            <person name="Matsumoto T."/>
        </authorList>
    </citation>
    <scope>GENOME REANNOTATION</scope>
    <source>
        <strain>cv. Nipponbare</strain>
    </source>
</reference>
<reference key="4">
    <citation type="journal article" date="2003" name="Science">
        <title>Collection, mapping, and annotation of over 28,000 cDNA clones from japonica rice.</title>
        <authorList>
            <consortium name="The rice full-length cDNA consortium"/>
        </authorList>
    </citation>
    <scope>NUCLEOTIDE SEQUENCE [LARGE SCALE MRNA]</scope>
    <source>
        <strain>cv. Nipponbare</strain>
    </source>
</reference>
<reference key="5">
    <citation type="journal article" date="2006" name="J. Biol. Chem.">
        <title>MUBS: a family of ubiquitin-fold proteins that are plasma membrane-anchored by prenylation.</title>
        <authorList>
            <person name="Downes B.P."/>
            <person name="Saracco S.A."/>
            <person name="Lee S.S."/>
            <person name="Crowell D.N."/>
            <person name="Vierstra R.D."/>
        </authorList>
    </citation>
    <scope>IDENTIFICATION</scope>
    <scope>NOMENCLATURE</scope>
</reference>
<proteinExistence type="evidence at transcript level"/>
<evidence type="ECO:0000250" key="1">
    <source>
        <dbReference type="UniProtKB" id="Q9SH14"/>
    </source>
</evidence>
<evidence type="ECO:0000305" key="2"/>